<protein>
    <recommendedName>
        <fullName>Glycine dehydrogenase (decarboxylating), mitochondrial</fullName>
        <ecNumber>1.4.4.2</ecNumber>
    </recommendedName>
    <alternativeName>
        <fullName>Glycine cleavage system P protein</fullName>
    </alternativeName>
    <alternativeName>
        <fullName>Glycine decarboxylase</fullName>
    </alternativeName>
    <alternativeName>
        <fullName>Glycine dehydrogenase (aminomethyl-transferring)</fullName>
    </alternativeName>
</protein>
<evidence type="ECO:0000250" key="1"/>
<evidence type="ECO:0000255" key="2"/>
<evidence type="ECO:0000305" key="3"/>
<name>GCSP_FLATR</name>
<feature type="transit peptide" description="Mitochondrion" evidence="2">
    <location>
        <begin position="1"/>
        <end position="63"/>
    </location>
</feature>
<feature type="chain" id="PRO_0000010748" description="Glycine dehydrogenase (decarboxylating), mitochondrial">
    <location>
        <begin position="64"/>
        <end position="1034"/>
    </location>
</feature>
<feature type="modified residue" description="N6-(pyridoxal phosphate)lysine" evidence="1">
    <location>
        <position position="770"/>
    </location>
</feature>
<accession>O49852</accession>
<proteinExistence type="inferred from homology"/>
<organism>
    <name type="scientific">Flaveria trinervia</name>
    <name type="common">Clustered yellowtops</name>
    <name type="synonym">Oedera trinervia</name>
    <dbReference type="NCBI Taxonomy" id="4227"/>
    <lineage>
        <taxon>Eukaryota</taxon>
        <taxon>Viridiplantae</taxon>
        <taxon>Streptophyta</taxon>
        <taxon>Embryophyta</taxon>
        <taxon>Tracheophyta</taxon>
        <taxon>Spermatophyta</taxon>
        <taxon>Magnoliopsida</taxon>
        <taxon>eudicotyledons</taxon>
        <taxon>Gunneridae</taxon>
        <taxon>Pentapetalae</taxon>
        <taxon>asterids</taxon>
        <taxon>campanulids</taxon>
        <taxon>Asterales</taxon>
        <taxon>Asteraceae</taxon>
        <taxon>Asteroideae</taxon>
        <taxon>Heliantheae alliance</taxon>
        <taxon>Tageteae</taxon>
        <taxon>Flaveria</taxon>
    </lineage>
</organism>
<comment type="function">
    <text>The glycine cleavage system catalyzes the degradation of glycine. The P protein binds the alpha-amino group of glycine through its pyridoxal phosphate cofactor; CO(2) is released and the remaining methylamine moiety is then transferred to the lipoamide cofactor of the H protein.</text>
</comment>
<comment type="catalytic activity">
    <reaction>
        <text>N(6)-[(R)-lipoyl]-L-lysyl-[glycine-cleavage complex H protein] + glycine + H(+) = N(6)-[(R)-S(8)-aminomethyldihydrolipoyl]-L-lysyl-[glycine-cleavage complex H protein] + CO2</text>
        <dbReference type="Rhea" id="RHEA:24304"/>
        <dbReference type="Rhea" id="RHEA-COMP:10494"/>
        <dbReference type="Rhea" id="RHEA-COMP:10495"/>
        <dbReference type="ChEBI" id="CHEBI:15378"/>
        <dbReference type="ChEBI" id="CHEBI:16526"/>
        <dbReference type="ChEBI" id="CHEBI:57305"/>
        <dbReference type="ChEBI" id="CHEBI:83099"/>
        <dbReference type="ChEBI" id="CHEBI:83143"/>
        <dbReference type="EC" id="1.4.4.2"/>
    </reaction>
</comment>
<comment type="cofactor">
    <cofactor>
        <name>pyridoxal 5'-phosphate</name>
        <dbReference type="ChEBI" id="CHEBI:597326"/>
    </cofactor>
</comment>
<comment type="subunit">
    <text evidence="1">Homodimer (By similarity). The glycine cleavage system is composed of four proteins: P, T, L and H.</text>
</comment>
<comment type="subcellular location">
    <subcellularLocation>
        <location>Mitochondrion</location>
    </subcellularLocation>
</comment>
<comment type="similarity">
    <text evidence="3">Belongs to the GcvP family.</text>
</comment>
<sequence length="1034" mass="112735">MERARRLAMLGRLVSQTKHNPSISSSALCSPSRYVSSLSPYVCSGTNVRSDRNLNGFGSQVRTISVEALKPSDTFPRRHNSATPEEQTKMAEFVGFSNLDSLIDATVPKAIRLDSMKYSKFDEGLTESQMIAHMQDLASKNKIFKSFIGMGYYNTSVPTVILRNIMENPGWYTQYTPYQAEIAQGRLESLLNFQTMITDLTGLPMSNASLLDEGTAAAEAMAMCNNIQKGKKKTFIIASNCHPQTIDICKTRADGFDLKVVTSDLKDFDYSSGDVCGVLVQYPGTEGELLDYSEFIKNAHANGVKVVMASDLLALTILKPPGELGADIVVGSAQRFGVPMGYGGPHAAFLATSQEYKRMMPGRIIGVSVDSSGKPALRMAMQTREQHIRRDKATSNICTAQALLANMAAMYGVYHGPEGLKTIAKRVHGLAGTFAAGLKKLGTVQVQDLPFFDTVKVTCADSKAIAEEAYKHKMNLRIVDKNTITVAFDETTTIEDVDTLFKVFALGKPVTFTAASIAPEVQDAIPSGLVRETPYLTHPIFNMYHTEHELLRYISKLQSKDLSLCHSMIPLGSCTMKLNATTEMMPVTWPAFADIHPFAPTEQAQGYQEMFKNLGDLLCTITGFDSFSLQPNAGAAGEYAGLMVIQAYHMARGDHHRKVCIIPVSAHGTNPASAAMCGMKIITVGTDSKGNINIEELRKAAEANKENLSALMVTYPSTHGVYEEGIDEICKIIHDNGGQVYMDGANMNAQVGLTSPGWIGADVCHLNLHKTFCIPHGGGGPGMGPIGVKKHLAPYLPSHPVVPTGGIPAPEQSQPLGTIAAAPWGSALILPISYTYIAMMGSQGITNASKIAILNANYMAKRLENHYPILFRGVNGTVAHEFIVDLRPLKTTAGIEPEDVAKRLIDYGFHGPTMSWPVPGTLMIEPTESESKAELDRFCDALISIRQEIAEIEKGTVDFNNNVIKGAPHPPQLLMADKWTKPYSREYAAYPAPWLRAAKFWPTTCRVDNVYGDRNLICTLQPPQEYEEKAEATA</sequence>
<dbReference type="EC" id="1.4.4.2"/>
<dbReference type="EMBL" id="Z99767">
    <property type="protein sequence ID" value="CAB16916.1"/>
    <property type="molecule type" value="Genomic_DNA"/>
</dbReference>
<dbReference type="SMR" id="O49852"/>
<dbReference type="GO" id="GO:0048046">
    <property type="term" value="C:apoplast"/>
    <property type="evidence" value="ECO:0007669"/>
    <property type="project" value="TreeGrafter"/>
</dbReference>
<dbReference type="GO" id="GO:0009941">
    <property type="term" value="C:chloroplast envelope"/>
    <property type="evidence" value="ECO:0007669"/>
    <property type="project" value="TreeGrafter"/>
</dbReference>
<dbReference type="GO" id="GO:0005960">
    <property type="term" value="C:glycine cleavage complex"/>
    <property type="evidence" value="ECO:0007669"/>
    <property type="project" value="TreeGrafter"/>
</dbReference>
<dbReference type="GO" id="GO:0005739">
    <property type="term" value="C:mitochondrion"/>
    <property type="evidence" value="ECO:0007669"/>
    <property type="project" value="UniProtKB-SubCell"/>
</dbReference>
<dbReference type="GO" id="GO:0016594">
    <property type="term" value="F:glycine binding"/>
    <property type="evidence" value="ECO:0007669"/>
    <property type="project" value="TreeGrafter"/>
</dbReference>
<dbReference type="GO" id="GO:0004375">
    <property type="term" value="F:glycine dehydrogenase (decarboxylating) activity"/>
    <property type="evidence" value="ECO:0007669"/>
    <property type="project" value="UniProtKB-EC"/>
</dbReference>
<dbReference type="GO" id="GO:0030170">
    <property type="term" value="F:pyridoxal phosphate binding"/>
    <property type="evidence" value="ECO:0007669"/>
    <property type="project" value="TreeGrafter"/>
</dbReference>
<dbReference type="GO" id="GO:0019464">
    <property type="term" value="P:glycine decarboxylation via glycine cleavage system"/>
    <property type="evidence" value="ECO:0007669"/>
    <property type="project" value="TreeGrafter"/>
</dbReference>
<dbReference type="CDD" id="cd00613">
    <property type="entry name" value="GDC-P"/>
    <property type="match status" value="2"/>
</dbReference>
<dbReference type="FunFam" id="3.90.1150.10:FF:000025">
    <property type="entry name" value="Glycine cleavage system P protein"/>
    <property type="match status" value="1"/>
</dbReference>
<dbReference type="FunFam" id="3.40.640.10:FF:000005">
    <property type="entry name" value="Glycine dehydrogenase (decarboxylating), mitochondrial"/>
    <property type="match status" value="1"/>
</dbReference>
<dbReference type="FunFam" id="3.90.1150.10:FF:000007">
    <property type="entry name" value="Glycine dehydrogenase (decarboxylating), mitochondrial"/>
    <property type="match status" value="1"/>
</dbReference>
<dbReference type="FunFam" id="3.40.640.10:FF:000007">
    <property type="entry name" value="glycine dehydrogenase (Decarboxylating), mitochondrial"/>
    <property type="match status" value="1"/>
</dbReference>
<dbReference type="Gene3D" id="3.90.1150.10">
    <property type="entry name" value="Aspartate Aminotransferase, domain 1"/>
    <property type="match status" value="2"/>
</dbReference>
<dbReference type="Gene3D" id="3.40.640.10">
    <property type="entry name" value="Type I PLP-dependent aspartate aminotransferase-like (Major domain)"/>
    <property type="match status" value="2"/>
</dbReference>
<dbReference type="HAMAP" id="MF_00711">
    <property type="entry name" value="GcvP"/>
    <property type="match status" value="1"/>
</dbReference>
<dbReference type="InterPro" id="IPR003437">
    <property type="entry name" value="GcvP"/>
</dbReference>
<dbReference type="InterPro" id="IPR049316">
    <property type="entry name" value="GDC-P_C"/>
</dbReference>
<dbReference type="InterPro" id="IPR049315">
    <property type="entry name" value="GDC-P_N"/>
</dbReference>
<dbReference type="InterPro" id="IPR020581">
    <property type="entry name" value="GDC_P"/>
</dbReference>
<dbReference type="InterPro" id="IPR015424">
    <property type="entry name" value="PyrdxlP-dep_Trfase"/>
</dbReference>
<dbReference type="InterPro" id="IPR015421">
    <property type="entry name" value="PyrdxlP-dep_Trfase_major"/>
</dbReference>
<dbReference type="InterPro" id="IPR015422">
    <property type="entry name" value="PyrdxlP-dep_Trfase_small"/>
</dbReference>
<dbReference type="NCBIfam" id="TIGR00461">
    <property type="entry name" value="gcvP"/>
    <property type="match status" value="1"/>
</dbReference>
<dbReference type="NCBIfam" id="NF003346">
    <property type="entry name" value="PRK04366.1"/>
    <property type="match status" value="1"/>
</dbReference>
<dbReference type="PANTHER" id="PTHR11773:SF12">
    <property type="entry name" value="GLYCINE CLEAVAGE SYSTEM P PROTEIN"/>
    <property type="match status" value="1"/>
</dbReference>
<dbReference type="PANTHER" id="PTHR11773">
    <property type="entry name" value="GLYCINE DEHYDROGENASE, DECARBOXYLATING"/>
    <property type="match status" value="1"/>
</dbReference>
<dbReference type="Pfam" id="PF21478">
    <property type="entry name" value="GcvP2_C"/>
    <property type="match status" value="1"/>
</dbReference>
<dbReference type="Pfam" id="PF02347">
    <property type="entry name" value="GDC-P"/>
    <property type="match status" value="2"/>
</dbReference>
<dbReference type="SUPFAM" id="SSF53383">
    <property type="entry name" value="PLP-dependent transferases"/>
    <property type="match status" value="2"/>
</dbReference>
<gene>
    <name type="primary">GDCSPA</name>
    <name type="synonym">GDCSP</name>
</gene>
<reference key="1">
    <citation type="online journal article" date="1998" name="Plant Gene Register">
        <title>Two genes of the GDCSP gene family from the C4 plant Flaveria trinervia: GDCSPA encoding P-protein and GDCSPB, a pseudogene.</title>
        <authorList>
            <person name="Cossu R."/>
            <person name="Bauwe H."/>
        </authorList>
        <locator>PGR98-002</locator>
    </citation>
    <scope>NUCLEOTIDE SEQUENCE [GENOMIC DNA]</scope>
    <source>
        <tissue>Leaf</tissue>
    </source>
</reference>
<keyword id="KW-0496">Mitochondrion</keyword>
<keyword id="KW-0560">Oxidoreductase</keyword>
<keyword id="KW-0663">Pyridoxal phosphate</keyword>
<keyword id="KW-0809">Transit peptide</keyword>